<protein>
    <recommendedName>
        <fullName evidence="1">UDP-N-acetylmuramoylalanine--D-glutamate ligase</fullName>
        <ecNumber evidence="1">6.3.2.9</ecNumber>
    </recommendedName>
    <alternativeName>
        <fullName evidence="1">D-glutamic acid-adding enzyme</fullName>
    </alternativeName>
    <alternativeName>
        <fullName evidence="1">UDP-N-acetylmuramoyl-L-alanyl-D-glutamate synthetase</fullName>
    </alternativeName>
</protein>
<organism>
    <name type="scientific">Staphylococcus aureus (strain COL)</name>
    <dbReference type="NCBI Taxonomy" id="93062"/>
    <lineage>
        <taxon>Bacteria</taxon>
        <taxon>Bacillati</taxon>
        <taxon>Bacillota</taxon>
        <taxon>Bacilli</taxon>
        <taxon>Bacillales</taxon>
        <taxon>Staphylococcaceae</taxon>
        <taxon>Staphylococcus</taxon>
    </lineage>
</organism>
<accession>Q5HGP8</accession>
<evidence type="ECO:0000255" key="1">
    <source>
        <dbReference type="HAMAP-Rule" id="MF_00639"/>
    </source>
</evidence>
<proteinExistence type="inferred from homology"/>
<name>MURD_STAAC</name>
<reference key="1">
    <citation type="journal article" date="2005" name="J. Bacteriol.">
        <title>Insights on evolution of virulence and resistance from the complete genome analysis of an early methicillin-resistant Staphylococcus aureus strain and a biofilm-producing methicillin-resistant Staphylococcus epidermidis strain.</title>
        <authorList>
            <person name="Gill S.R."/>
            <person name="Fouts D.E."/>
            <person name="Archer G.L."/>
            <person name="Mongodin E.F."/>
            <person name="DeBoy R.T."/>
            <person name="Ravel J."/>
            <person name="Paulsen I.T."/>
            <person name="Kolonay J.F."/>
            <person name="Brinkac L.M."/>
            <person name="Beanan M.J."/>
            <person name="Dodson R.J."/>
            <person name="Daugherty S.C."/>
            <person name="Madupu R."/>
            <person name="Angiuoli S.V."/>
            <person name="Durkin A.S."/>
            <person name="Haft D.H."/>
            <person name="Vamathevan J.J."/>
            <person name="Khouri H."/>
            <person name="Utterback T.R."/>
            <person name="Lee C."/>
            <person name="Dimitrov G."/>
            <person name="Jiang L."/>
            <person name="Qin H."/>
            <person name="Weidman J."/>
            <person name="Tran K."/>
            <person name="Kang K.H."/>
            <person name="Hance I.R."/>
            <person name="Nelson K.E."/>
            <person name="Fraser C.M."/>
        </authorList>
    </citation>
    <scope>NUCLEOTIDE SEQUENCE [LARGE SCALE GENOMIC DNA]</scope>
    <source>
        <strain>COL</strain>
    </source>
</reference>
<dbReference type="EC" id="6.3.2.9" evidence="1"/>
<dbReference type="EMBL" id="CP000046">
    <property type="protein sequence ID" value="AAW36575.1"/>
    <property type="molecule type" value="Genomic_DNA"/>
</dbReference>
<dbReference type="RefSeq" id="WP_000935991.1">
    <property type="nucleotide sequence ID" value="NZ_JBGOFO010000002.1"/>
</dbReference>
<dbReference type="SMR" id="Q5HGP8"/>
<dbReference type="KEGG" id="sac:SACOL1196"/>
<dbReference type="HOGENOM" id="CLU_032540_0_1_9"/>
<dbReference type="UniPathway" id="UPA00219"/>
<dbReference type="Proteomes" id="UP000000530">
    <property type="component" value="Chromosome"/>
</dbReference>
<dbReference type="GO" id="GO:0005737">
    <property type="term" value="C:cytoplasm"/>
    <property type="evidence" value="ECO:0007669"/>
    <property type="project" value="UniProtKB-SubCell"/>
</dbReference>
<dbReference type="GO" id="GO:0005524">
    <property type="term" value="F:ATP binding"/>
    <property type="evidence" value="ECO:0007669"/>
    <property type="project" value="UniProtKB-UniRule"/>
</dbReference>
<dbReference type="GO" id="GO:0008764">
    <property type="term" value="F:UDP-N-acetylmuramoylalanine-D-glutamate ligase activity"/>
    <property type="evidence" value="ECO:0007669"/>
    <property type="project" value="UniProtKB-UniRule"/>
</dbReference>
<dbReference type="GO" id="GO:0051301">
    <property type="term" value="P:cell division"/>
    <property type="evidence" value="ECO:0007669"/>
    <property type="project" value="UniProtKB-KW"/>
</dbReference>
<dbReference type="GO" id="GO:0071555">
    <property type="term" value="P:cell wall organization"/>
    <property type="evidence" value="ECO:0007669"/>
    <property type="project" value="UniProtKB-KW"/>
</dbReference>
<dbReference type="GO" id="GO:0009252">
    <property type="term" value="P:peptidoglycan biosynthetic process"/>
    <property type="evidence" value="ECO:0007669"/>
    <property type="project" value="UniProtKB-UniRule"/>
</dbReference>
<dbReference type="GO" id="GO:0008360">
    <property type="term" value="P:regulation of cell shape"/>
    <property type="evidence" value="ECO:0007669"/>
    <property type="project" value="UniProtKB-KW"/>
</dbReference>
<dbReference type="Gene3D" id="3.90.190.20">
    <property type="entry name" value="Mur ligase, C-terminal domain"/>
    <property type="match status" value="1"/>
</dbReference>
<dbReference type="Gene3D" id="3.40.1190.10">
    <property type="entry name" value="Mur-like, catalytic domain"/>
    <property type="match status" value="1"/>
</dbReference>
<dbReference type="Gene3D" id="3.40.50.720">
    <property type="entry name" value="NAD(P)-binding Rossmann-like Domain"/>
    <property type="match status" value="1"/>
</dbReference>
<dbReference type="HAMAP" id="MF_00639">
    <property type="entry name" value="MurD"/>
    <property type="match status" value="1"/>
</dbReference>
<dbReference type="InterPro" id="IPR036565">
    <property type="entry name" value="Mur-like_cat_sf"/>
</dbReference>
<dbReference type="InterPro" id="IPR004101">
    <property type="entry name" value="Mur_ligase_C"/>
</dbReference>
<dbReference type="InterPro" id="IPR036615">
    <property type="entry name" value="Mur_ligase_C_dom_sf"/>
</dbReference>
<dbReference type="InterPro" id="IPR013221">
    <property type="entry name" value="Mur_ligase_cen"/>
</dbReference>
<dbReference type="InterPro" id="IPR005762">
    <property type="entry name" value="MurD"/>
</dbReference>
<dbReference type="NCBIfam" id="TIGR01087">
    <property type="entry name" value="murD"/>
    <property type="match status" value="1"/>
</dbReference>
<dbReference type="PANTHER" id="PTHR43692">
    <property type="entry name" value="UDP-N-ACETYLMURAMOYLALANINE--D-GLUTAMATE LIGASE"/>
    <property type="match status" value="1"/>
</dbReference>
<dbReference type="PANTHER" id="PTHR43692:SF1">
    <property type="entry name" value="UDP-N-ACETYLMURAMOYLALANINE--D-GLUTAMATE LIGASE"/>
    <property type="match status" value="1"/>
</dbReference>
<dbReference type="Pfam" id="PF02875">
    <property type="entry name" value="Mur_ligase_C"/>
    <property type="match status" value="1"/>
</dbReference>
<dbReference type="Pfam" id="PF08245">
    <property type="entry name" value="Mur_ligase_M"/>
    <property type="match status" value="1"/>
</dbReference>
<dbReference type="Pfam" id="PF21799">
    <property type="entry name" value="MurD-like_N"/>
    <property type="match status" value="1"/>
</dbReference>
<dbReference type="SUPFAM" id="SSF51984">
    <property type="entry name" value="MurCD N-terminal domain"/>
    <property type="match status" value="1"/>
</dbReference>
<dbReference type="SUPFAM" id="SSF53623">
    <property type="entry name" value="MurD-like peptide ligases, catalytic domain"/>
    <property type="match status" value="1"/>
</dbReference>
<dbReference type="SUPFAM" id="SSF53244">
    <property type="entry name" value="MurD-like peptide ligases, peptide-binding domain"/>
    <property type="match status" value="1"/>
</dbReference>
<keyword id="KW-0067">ATP-binding</keyword>
<keyword id="KW-0131">Cell cycle</keyword>
<keyword id="KW-0132">Cell division</keyword>
<keyword id="KW-0133">Cell shape</keyword>
<keyword id="KW-0961">Cell wall biogenesis/degradation</keyword>
<keyword id="KW-0963">Cytoplasm</keyword>
<keyword id="KW-0436">Ligase</keyword>
<keyword id="KW-0547">Nucleotide-binding</keyword>
<keyword id="KW-0573">Peptidoglycan synthesis</keyword>
<comment type="function">
    <text evidence="1">Cell wall formation. Catalyzes the addition of glutamate to the nucleotide precursor UDP-N-acetylmuramoyl-L-alanine (UMA).</text>
</comment>
<comment type="catalytic activity">
    <reaction evidence="1">
        <text>UDP-N-acetyl-alpha-D-muramoyl-L-alanine + D-glutamate + ATP = UDP-N-acetyl-alpha-D-muramoyl-L-alanyl-D-glutamate + ADP + phosphate + H(+)</text>
        <dbReference type="Rhea" id="RHEA:16429"/>
        <dbReference type="ChEBI" id="CHEBI:15378"/>
        <dbReference type="ChEBI" id="CHEBI:29986"/>
        <dbReference type="ChEBI" id="CHEBI:30616"/>
        <dbReference type="ChEBI" id="CHEBI:43474"/>
        <dbReference type="ChEBI" id="CHEBI:83898"/>
        <dbReference type="ChEBI" id="CHEBI:83900"/>
        <dbReference type="ChEBI" id="CHEBI:456216"/>
        <dbReference type="EC" id="6.3.2.9"/>
    </reaction>
</comment>
<comment type="pathway">
    <text evidence="1">Cell wall biogenesis; peptidoglycan biosynthesis.</text>
</comment>
<comment type="subcellular location">
    <subcellularLocation>
        <location evidence="1">Cytoplasm</location>
    </subcellularLocation>
</comment>
<comment type="similarity">
    <text evidence="1">Belongs to the MurCDEF family.</text>
</comment>
<sequence>MLNYTGLENKNVLVVGLAKSGYEAAKLLSKLGANVTVNDGKDLSQDAHAKDLESMGISVVSGSHPLTLLDNNPIIVKNPGIPYTVSIIDEAVKRGLKILTEVELSYLISEAPIIAVTGTNGKTTVTSLIGDMFKKSRLTGRLSGNIGYVASKVAQEVKPTDYLVTELSSFQLLGIEKYKPHIAIITNIYSAHLDYHENLENYQNAKKQIYKNQTEEDYLICNYHQRQVIESEELKAKTLYFSTQQEVDGIYIKDGFIVYKGVRIINTEDLVLPGEHNLENILAAVLACILAGVPIKAIIDSLTTFSGIEHRLQYVGTNRTNKYYNDSKATNTLATQFALNSFNQPIIWLCGGLDRGNEFDELIPYMENVRAMVVFGQTKAKFAKLGNSQGKSVIEANNVEDAVDKVQDIIEPNDVVLLSPACASWDQYSTFEERGEKFIERFRAHLPSY</sequence>
<feature type="chain" id="PRO_0000109084" description="UDP-N-acetylmuramoylalanine--D-glutamate ligase">
    <location>
        <begin position="1"/>
        <end position="449"/>
    </location>
</feature>
<feature type="binding site" evidence="1">
    <location>
        <begin position="118"/>
        <end position="124"/>
    </location>
    <ligand>
        <name>ATP</name>
        <dbReference type="ChEBI" id="CHEBI:30616"/>
    </ligand>
</feature>
<gene>
    <name evidence="1" type="primary">murD</name>
    <name type="ordered locus">SACOL1196</name>
</gene>